<reference key="1">
    <citation type="journal article" date="2005" name="Nucleic Acids Res.">
        <title>The genome sequence of Salmonella enterica serovar Choleraesuis, a highly invasive and resistant zoonotic pathogen.</title>
        <authorList>
            <person name="Chiu C.-H."/>
            <person name="Tang P."/>
            <person name="Chu C."/>
            <person name="Hu S."/>
            <person name="Bao Q."/>
            <person name="Yu J."/>
            <person name="Chou Y.-Y."/>
            <person name="Wang H.-S."/>
            <person name="Lee Y.-S."/>
        </authorList>
    </citation>
    <scope>NUCLEOTIDE SEQUENCE [LARGE SCALE GENOMIC DNA]</scope>
    <source>
        <strain>SC-B67</strain>
    </source>
</reference>
<feature type="chain" id="PRO_1000008979" description="Sulfate adenylyltransferase subunit 2">
    <location>
        <begin position="1"/>
        <end position="302"/>
    </location>
</feature>
<gene>
    <name evidence="1" type="primary">cysD</name>
    <name type="ordered locus">SCH_2867</name>
</gene>
<proteinExistence type="inferred from homology"/>
<dbReference type="EC" id="2.7.7.4" evidence="1"/>
<dbReference type="EMBL" id="AE017220">
    <property type="protein sequence ID" value="AAX66773.1"/>
    <property type="molecule type" value="Genomic_DNA"/>
</dbReference>
<dbReference type="RefSeq" id="WP_000372384.1">
    <property type="nucleotide sequence ID" value="NC_006905.1"/>
</dbReference>
<dbReference type="SMR" id="Q57KI9"/>
<dbReference type="KEGG" id="sec:SCH_2867"/>
<dbReference type="HOGENOM" id="CLU_043026_0_0_6"/>
<dbReference type="UniPathway" id="UPA00140">
    <property type="reaction ID" value="UER00204"/>
</dbReference>
<dbReference type="Proteomes" id="UP000000538">
    <property type="component" value="Chromosome"/>
</dbReference>
<dbReference type="GO" id="GO:0005524">
    <property type="term" value="F:ATP binding"/>
    <property type="evidence" value="ECO:0007669"/>
    <property type="project" value="UniProtKB-KW"/>
</dbReference>
<dbReference type="GO" id="GO:0004781">
    <property type="term" value="F:sulfate adenylyltransferase (ATP) activity"/>
    <property type="evidence" value="ECO:0007669"/>
    <property type="project" value="UniProtKB-UniRule"/>
</dbReference>
<dbReference type="GO" id="GO:0070814">
    <property type="term" value="P:hydrogen sulfide biosynthetic process"/>
    <property type="evidence" value="ECO:0007669"/>
    <property type="project" value="UniProtKB-UniRule"/>
</dbReference>
<dbReference type="GO" id="GO:0000103">
    <property type="term" value="P:sulfate assimilation"/>
    <property type="evidence" value="ECO:0007669"/>
    <property type="project" value="UniProtKB-UniRule"/>
</dbReference>
<dbReference type="CDD" id="cd23946">
    <property type="entry name" value="Sulfate_adenylyltransferase_2"/>
    <property type="match status" value="1"/>
</dbReference>
<dbReference type="FunFam" id="3.40.50.620:FF:000002">
    <property type="entry name" value="Sulfate adenylyltransferase subunit 2"/>
    <property type="match status" value="1"/>
</dbReference>
<dbReference type="Gene3D" id="3.40.50.620">
    <property type="entry name" value="HUPs"/>
    <property type="match status" value="1"/>
</dbReference>
<dbReference type="HAMAP" id="MF_00064">
    <property type="entry name" value="Sulf_adenylyltr_sub2"/>
    <property type="match status" value="1"/>
</dbReference>
<dbReference type="InterPro" id="IPR002500">
    <property type="entry name" value="PAPS_reduct_dom"/>
</dbReference>
<dbReference type="InterPro" id="IPR014729">
    <property type="entry name" value="Rossmann-like_a/b/a_fold"/>
</dbReference>
<dbReference type="InterPro" id="IPR011784">
    <property type="entry name" value="SO4_adenylTrfase_ssu"/>
</dbReference>
<dbReference type="InterPro" id="IPR050128">
    <property type="entry name" value="Sulfate_adenylyltrnsfr_sub2"/>
</dbReference>
<dbReference type="NCBIfam" id="TIGR02039">
    <property type="entry name" value="CysD"/>
    <property type="match status" value="1"/>
</dbReference>
<dbReference type="NCBIfam" id="NF003587">
    <property type="entry name" value="PRK05253.1"/>
    <property type="match status" value="1"/>
</dbReference>
<dbReference type="NCBIfam" id="NF009214">
    <property type="entry name" value="PRK12563.1"/>
    <property type="match status" value="1"/>
</dbReference>
<dbReference type="PANTHER" id="PTHR43196">
    <property type="entry name" value="SULFATE ADENYLYLTRANSFERASE SUBUNIT 2"/>
    <property type="match status" value="1"/>
</dbReference>
<dbReference type="PANTHER" id="PTHR43196:SF1">
    <property type="entry name" value="SULFATE ADENYLYLTRANSFERASE SUBUNIT 2"/>
    <property type="match status" value="1"/>
</dbReference>
<dbReference type="Pfam" id="PF01507">
    <property type="entry name" value="PAPS_reduct"/>
    <property type="match status" value="1"/>
</dbReference>
<dbReference type="PIRSF" id="PIRSF002936">
    <property type="entry name" value="CysDAde_trans"/>
    <property type="match status" value="1"/>
</dbReference>
<dbReference type="SUPFAM" id="SSF52402">
    <property type="entry name" value="Adenine nucleotide alpha hydrolases-like"/>
    <property type="match status" value="1"/>
</dbReference>
<evidence type="ECO:0000255" key="1">
    <source>
        <dbReference type="HAMAP-Rule" id="MF_00064"/>
    </source>
</evidence>
<organism>
    <name type="scientific">Salmonella choleraesuis (strain SC-B67)</name>
    <dbReference type="NCBI Taxonomy" id="321314"/>
    <lineage>
        <taxon>Bacteria</taxon>
        <taxon>Pseudomonadati</taxon>
        <taxon>Pseudomonadota</taxon>
        <taxon>Gammaproteobacteria</taxon>
        <taxon>Enterobacterales</taxon>
        <taxon>Enterobacteriaceae</taxon>
        <taxon>Salmonella</taxon>
    </lineage>
</organism>
<comment type="function">
    <text evidence="1">With CysN forms the ATP sulfurylase (ATPS) that catalyzes the adenylation of sulfate producing adenosine 5'-phosphosulfate (APS) and diphosphate, the first enzymatic step in sulfur assimilation pathway. APS synthesis involves the formation of a high-energy phosphoric-sulfuric acid anhydride bond driven by GTP hydrolysis by CysN coupled to ATP hydrolysis by CysD.</text>
</comment>
<comment type="catalytic activity">
    <reaction evidence="1">
        <text>sulfate + ATP + H(+) = adenosine 5'-phosphosulfate + diphosphate</text>
        <dbReference type="Rhea" id="RHEA:18133"/>
        <dbReference type="ChEBI" id="CHEBI:15378"/>
        <dbReference type="ChEBI" id="CHEBI:16189"/>
        <dbReference type="ChEBI" id="CHEBI:30616"/>
        <dbReference type="ChEBI" id="CHEBI:33019"/>
        <dbReference type="ChEBI" id="CHEBI:58243"/>
        <dbReference type="EC" id="2.7.7.4"/>
    </reaction>
</comment>
<comment type="pathway">
    <text evidence="1">Sulfur metabolism; hydrogen sulfide biosynthesis; sulfite from sulfate: step 1/3.</text>
</comment>
<comment type="subunit">
    <text evidence="1">Heterodimer composed of CysD, the smaller subunit, and CysN.</text>
</comment>
<comment type="similarity">
    <text evidence="1">Belongs to the PAPS reductase family. CysD subfamily.</text>
</comment>
<name>CYSD_SALCH</name>
<keyword id="KW-0067">ATP-binding</keyword>
<keyword id="KW-0547">Nucleotide-binding</keyword>
<keyword id="KW-0548">Nucleotidyltransferase</keyword>
<keyword id="KW-0808">Transferase</keyword>
<sequence length="302" mass="35176">MDQKRLTHLRQLEAESIHIIREVAAEFANPVMLYSIGKDSSVMLHLARKAFYPGTLPFPLLHVDTGWKFREMYAFRDRTANAYGCELLVHKNPEGVAMGINPFVHGSAKHTDIMKTEGLKQALNKYGFDAAFGGARRDEEKSRAKERIYSFRDRFHRWDPKNQRPELWRNYNGQINKGESIRVFPLSNWTEQDIWQYIWLENIDIVPLYLAAERPVLERDGMLMMVDDDRIDLQPGEVIKKRMVRFRTLGCWPLTGAVESHAQTLPEIIEEMLVSTTSERQGRMIDRDQAGSMELKKRQGYF</sequence>
<accession>Q57KI9</accession>
<protein>
    <recommendedName>
        <fullName evidence="1">Sulfate adenylyltransferase subunit 2</fullName>
        <ecNumber evidence="1">2.7.7.4</ecNumber>
    </recommendedName>
    <alternativeName>
        <fullName evidence="1">ATP-sulfurylase small subunit</fullName>
    </alternativeName>
    <alternativeName>
        <fullName evidence="1">Sulfate adenylate transferase</fullName>
        <shortName evidence="1">SAT</shortName>
    </alternativeName>
</protein>